<sequence length="428" mass="47570">MTSVVVVGTQWGDEGKGKITDFLSANAEVIARYQGGDNAGHTIVIDGKKFKLHLIPSGIFFPEKISVIGNGMVVNPKSLVKELSYLHEEGVTTDNLRISDRAHVILPYHIELDRLQEEAKGDNKIGTTIKGIGPAYMDKAARVGIRIADLLDKDIFRERLERNLAEKNRLFEKLYDSKAIVFDDIFEEYYEYGQQIKKYVIDTSVILNDALDNGKRVLFEGAQGVMLDIDQGTYPFVTSSNPVAGGVTIGSGVGPSKIDKVVGVCKAYTSRVGDGPFPTELFDEVGERIREVGHEYGTTTGRPRRVGWFDSVVMRHSRRVSGITNLSLNSIDVLSGLDTVKICVAYDLDGQRIDYYPASLEQLKRCKPIYEELPGWSEDITGVRNLEDLPENARNYVRRVSELVGVRISTFSVGPGREQTNILESVWS</sequence>
<name>PURA_STRR6</name>
<feature type="chain" id="PRO_0000095240" description="Adenylosuccinate synthetase">
    <location>
        <begin position="1"/>
        <end position="428"/>
    </location>
</feature>
<feature type="active site" description="Proton acceptor" evidence="1">
    <location>
        <position position="13"/>
    </location>
</feature>
<feature type="active site" description="Proton donor" evidence="1">
    <location>
        <position position="41"/>
    </location>
</feature>
<feature type="binding site" evidence="1">
    <location>
        <begin position="12"/>
        <end position="18"/>
    </location>
    <ligand>
        <name>GTP</name>
        <dbReference type="ChEBI" id="CHEBI:37565"/>
    </ligand>
</feature>
<feature type="binding site" description="in other chain" evidence="1">
    <location>
        <begin position="13"/>
        <end position="16"/>
    </location>
    <ligand>
        <name>IMP</name>
        <dbReference type="ChEBI" id="CHEBI:58053"/>
        <note>ligand shared between dimeric partners</note>
    </ligand>
</feature>
<feature type="binding site" evidence="1">
    <location>
        <position position="13"/>
    </location>
    <ligand>
        <name>Mg(2+)</name>
        <dbReference type="ChEBI" id="CHEBI:18420"/>
    </ligand>
</feature>
<feature type="binding site" description="in other chain" evidence="1">
    <location>
        <begin position="38"/>
        <end position="41"/>
    </location>
    <ligand>
        <name>IMP</name>
        <dbReference type="ChEBI" id="CHEBI:58053"/>
        <note>ligand shared between dimeric partners</note>
    </ligand>
</feature>
<feature type="binding site" evidence="1">
    <location>
        <begin position="40"/>
        <end position="42"/>
    </location>
    <ligand>
        <name>GTP</name>
        <dbReference type="ChEBI" id="CHEBI:37565"/>
    </ligand>
</feature>
<feature type="binding site" evidence="1">
    <location>
        <position position="40"/>
    </location>
    <ligand>
        <name>Mg(2+)</name>
        <dbReference type="ChEBI" id="CHEBI:18420"/>
    </ligand>
</feature>
<feature type="binding site" description="in other chain" evidence="1">
    <location>
        <position position="128"/>
    </location>
    <ligand>
        <name>IMP</name>
        <dbReference type="ChEBI" id="CHEBI:58053"/>
        <note>ligand shared between dimeric partners</note>
    </ligand>
</feature>
<feature type="binding site" evidence="1">
    <location>
        <position position="142"/>
    </location>
    <ligand>
        <name>IMP</name>
        <dbReference type="ChEBI" id="CHEBI:58053"/>
        <note>ligand shared between dimeric partners</note>
    </ligand>
</feature>
<feature type="binding site" description="in other chain" evidence="1">
    <location>
        <position position="223"/>
    </location>
    <ligand>
        <name>IMP</name>
        <dbReference type="ChEBI" id="CHEBI:58053"/>
        <note>ligand shared between dimeric partners</note>
    </ligand>
</feature>
<feature type="binding site" description="in other chain" evidence="1">
    <location>
        <position position="238"/>
    </location>
    <ligand>
        <name>IMP</name>
        <dbReference type="ChEBI" id="CHEBI:58053"/>
        <note>ligand shared between dimeric partners</note>
    </ligand>
</feature>
<feature type="binding site" evidence="1">
    <location>
        <begin position="298"/>
        <end position="304"/>
    </location>
    <ligand>
        <name>substrate</name>
    </ligand>
</feature>
<feature type="binding site" description="in other chain" evidence="1">
    <location>
        <position position="302"/>
    </location>
    <ligand>
        <name>IMP</name>
        <dbReference type="ChEBI" id="CHEBI:58053"/>
        <note>ligand shared between dimeric partners</note>
    </ligand>
</feature>
<feature type="binding site" evidence="1">
    <location>
        <position position="304"/>
    </location>
    <ligand>
        <name>GTP</name>
        <dbReference type="ChEBI" id="CHEBI:37565"/>
    </ligand>
</feature>
<feature type="binding site" evidence="1">
    <location>
        <begin position="330"/>
        <end position="332"/>
    </location>
    <ligand>
        <name>GTP</name>
        <dbReference type="ChEBI" id="CHEBI:37565"/>
    </ligand>
</feature>
<feature type="binding site" evidence="1">
    <location>
        <begin position="412"/>
        <end position="414"/>
    </location>
    <ligand>
        <name>GTP</name>
        <dbReference type="ChEBI" id="CHEBI:37565"/>
    </ligand>
</feature>
<gene>
    <name evidence="1" type="primary">purA</name>
    <name type="ordered locus">spr0021</name>
</gene>
<comment type="function">
    <text evidence="1">Plays an important role in the de novo pathway of purine nucleotide biosynthesis. Catalyzes the first committed step in the biosynthesis of AMP from IMP.</text>
</comment>
<comment type="catalytic activity">
    <reaction evidence="1">
        <text>IMP + L-aspartate + GTP = N(6)-(1,2-dicarboxyethyl)-AMP + GDP + phosphate + 2 H(+)</text>
        <dbReference type="Rhea" id="RHEA:15753"/>
        <dbReference type="ChEBI" id="CHEBI:15378"/>
        <dbReference type="ChEBI" id="CHEBI:29991"/>
        <dbReference type="ChEBI" id="CHEBI:37565"/>
        <dbReference type="ChEBI" id="CHEBI:43474"/>
        <dbReference type="ChEBI" id="CHEBI:57567"/>
        <dbReference type="ChEBI" id="CHEBI:58053"/>
        <dbReference type="ChEBI" id="CHEBI:58189"/>
        <dbReference type="EC" id="6.3.4.4"/>
    </reaction>
</comment>
<comment type="cofactor">
    <cofactor evidence="1">
        <name>Mg(2+)</name>
        <dbReference type="ChEBI" id="CHEBI:18420"/>
    </cofactor>
    <text evidence="1">Binds 1 Mg(2+) ion per subunit.</text>
</comment>
<comment type="pathway">
    <text evidence="1">Purine metabolism; AMP biosynthesis via de novo pathway; AMP from IMP: step 1/2.</text>
</comment>
<comment type="subunit">
    <text evidence="1">Homodimer.</text>
</comment>
<comment type="subcellular location">
    <subcellularLocation>
        <location evidence="1">Cytoplasm</location>
    </subcellularLocation>
</comment>
<comment type="similarity">
    <text evidence="1">Belongs to the adenylosuccinate synthetase family.</text>
</comment>
<protein>
    <recommendedName>
        <fullName evidence="1">Adenylosuccinate synthetase</fullName>
        <shortName evidence="1">AMPSase</shortName>
        <shortName evidence="1">AdSS</shortName>
        <ecNumber evidence="1">6.3.4.4</ecNumber>
    </recommendedName>
    <alternativeName>
        <fullName evidence="1">IMP--aspartate ligase</fullName>
    </alternativeName>
</protein>
<keyword id="KW-0963">Cytoplasm</keyword>
<keyword id="KW-0342">GTP-binding</keyword>
<keyword id="KW-0436">Ligase</keyword>
<keyword id="KW-0460">Magnesium</keyword>
<keyword id="KW-0479">Metal-binding</keyword>
<keyword id="KW-0547">Nucleotide-binding</keyword>
<keyword id="KW-0658">Purine biosynthesis</keyword>
<keyword id="KW-1185">Reference proteome</keyword>
<organism>
    <name type="scientific">Streptococcus pneumoniae (strain ATCC BAA-255 / R6)</name>
    <dbReference type="NCBI Taxonomy" id="171101"/>
    <lineage>
        <taxon>Bacteria</taxon>
        <taxon>Bacillati</taxon>
        <taxon>Bacillota</taxon>
        <taxon>Bacilli</taxon>
        <taxon>Lactobacillales</taxon>
        <taxon>Streptococcaceae</taxon>
        <taxon>Streptococcus</taxon>
    </lineage>
</organism>
<proteinExistence type="inferred from homology"/>
<reference key="1">
    <citation type="journal article" date="2001" name="J. Bacteriol.">
        <title>Genome of the bacterium Streptococcus pneumoniae strain R6.</title>
        <authorList>
            <person name="Hoskins J."/>
            <person name="Alborn W.E. Jr."/>
            <person name="Arnold J."/>
            <person name="Blaszczak L.C."/>
            <person name="Burgett S."/>
            <person name="DeHoff B.S."/>
            <person name="Estrem S.T."/>
            <person name="Fritz L."/>
            <person name="Fu D.-J."/>
            <person name="Fuller W."/>
            <person name="Geringer C."/>
            <person name="Gilmour R."/>
            <person name="Glass J.S."/>
            <person name="Khoja H."/>
            <person name="Kraft A.R."/>
            <person name="Lagace R.E."/>
            <person name="LeBlanc D.J."/>
            <person name="Lee L.N."/>
            <person name="Lefkowitz E.J."/>
            <person name="Lu J."/>
            <person name="Matsushima P."/>
            <person name="McAhren S.M."/>
            <person name="McHenney M."/>
            <person name="McLeaster K."/>
            <person name="Mundy C.W."/>
            <person name="Nicas T.I."/>
            <person name="Norris F.H."/>
            <person name="O'Gara M."/>
            <person name="Peery R.B."/>
            <person name="Robertson G.T."/>
            <person name="Rockey P."/>
            <person name="Sun P.-M."/>
            <person name="Winkler M.E."/>
            <person name="Yang Y."/>
            <person name="Young-Bellido M."/>
            <person name="Zhao G."/>
            <person name="Zook C.A."/>
            <person name="Baltz R.H."/>
            <person name="Jaskunas S.R."/>
            <person name="Rosteck P.R. Jr."/>
            <person name="Skatrud P.L."/>
            <person name="Glass J.I."/>
        </authorList>
    </citation>
    <scope>NUCLEOTIDE SEQUENCE [LARGE SCALE GENOMIC DNA]</scope>
    <source>
        <strain>ATCC BAA-255 / R6</strain>
    </source>
</reference>
<dbReference type="EC" id="6.3.4.4" evidence="1"/>
<dbReference type="EMBL" id="AE007317">
    <property type="protein sequence ID" value="AAK98825.1"/>
    <property type="molecule type" value="Genomic_DNA"/>
</dbReference>
<dbReference type="PIR" id="E97874">
    <property type="entry name" value="E97874"/>
</dbReference>
<dbReference type="RefSeq" id="NP_357615.1">
    <property type="nucleotide sequence ID" value="NC_003098.1"/>
</dbReference>
<dbReference type="RefSeq" id="WP_000205044.1">
    <property type="nucleotide sequence ID" value="NC_003098.1"/>
</dbReference>
<dbReference type="SMR" id="P65888"/>
<dbReference type="STRING" id="171101.spr0021"/>
<dbReference type="KEGG" id="spr:spr0021"/>
<dbReference type="PATRIC" id="fig|171101.6.peg.23"/>
<dbReference type="eggNOG" id="COG0104">
    <property type="taxonomic scope" value="Bacteria"/>
</dbReference>
<dbReference type="HOGENOM" id="CLU_029848_0_0_9"/>
<dbReference type="UniPathway" id="UPA00075">
    <property type="reaction ID" value="UER00335"/>
</dbReference>
<dbReference type="Proteomes" id="UP000000586">
    <property type="component" value="Chromosome"/>
</dbReference>
<dbReference type="GO" id="GO:0005737">
    <property type="term" value="C:cytoplasm"/>
    <property type="evidence" value="ECO:0000318"/>
    <property type="project" value="GO_Central"/>
</dbReference>
<dbReference type="GO" id="GO:0004019">
    <property type="term" value="F:adenylosuccinate synthase activity"/>
    <property type="evidence" value="ECO:0000318"/>
    <property type="project" value="GO_Central"/>
</dbReference>
<dbReference type="GO" id="GO:0005525">
    <property type="term" value="F:GTP binding"/>
    <property type="evidence" value="ECO:0007669"/>
    <property type="project" value="UniProtKB-UniRule"/>
</dbReference>
<dbReference type="GO" id="GO:0000287">
    <property type="term" value="F:magnesium ion binding"/>
    <property type="evidence" value="ECO:0007669"/>
    <property type="project" value="UniProtKB-UniRule"/>
</dbReference>
<dbReference type="GO" id="GO:0044208">
    <property type="term" value="P:'de novo' AMP biosynthetic process"/>
    <property type="evidence" value="ECO:0000318"/>
    <property type="project" value="GO_Central"/>
</dbReference>
<dbReference type="GO" id="GO:0046040">
    <property type="term" value="P:IMP metabolic process"/>
    <property type="evidence" value="ECO:0000318"/>
    <property type="project" value="GO_Central"/>
</dbReference>
<dbReference type="CDD" id="cd03108">
    <property type="entry name" value="AdSS"/>
    <property type="match status" value="1"/>
</dbReference>
<dbReference type="FunFam" id="1.10.300.10:FF:000001">
    <property type="entry name" value="Adenylosuccinate synthetase"/>
    <property type="match status" value="1"/>
</dbReference>
<dbReference type="FunFam" id="3.90.170.10:FF:000001">
    <property type="entry name" value="Adenylosuccinate synthetase"/>
    <property type="match status" value="1"/>
</dbReference>
<dbReference type="Gene3D" id="3.40.440.10">
    <property type="entry name" value="Adenylosuccinate Synthetase, subunit A, domain 1"/>
    <property type="match status" value="1"/>
</dbReference>
<dbReference type="Gene3D" id="1.10.300.10">
    <property type="entry name" value="Adenylosuccinate Synthetase, subunit A, domain 2"/>
    <property type="match status" value="1"/>
</dbReference>
<dbReference type="Gene3D" id="3.90.170.10">
    <property type="entry name" value="Adenylosuccinate Synthetase, subunit A, domain 3"/>
    <property type="match status" value="1"/>
</dbReference>
<dbReference type="HAMAP" id="MF_00011">
    <property type="entry name" value="Adenylosucc_synth"/>
    <property type="match status" value="1"/>
</dbReference>
<dbReference type="InterPro" id="IPR018220">
    <property type="entry name" value="Adenylosuccin_syn_GTP-bd"/>
</dbReference>
<dbReference type="InterPro" id="IPR033128">
    <property type="entry name" value="Adenylosuccin_syn_Lys_AS"/>
</dbReference>
<dbReference type="InterPro" id="IPR042109">
    <property type="entry name" value="Adenylosuccinate_synth_dom1"/>
</dbReference>
<dbReference type="InterPro" id="IPR042110">
    <property type="entry name" value="Adenylosuccinate_synth_dom2"/>
</dbReference>
<dbReference type="InterPro" id="IPR042111">
    <property type="entry name" value="Adenylosuccinate_synth_dom3"/>
</dbReference>
<dbReference type="InterPro" id="IPR001114">
    <property type="entry name" value="Adenylosuccinate_synthetase"/>
</dbReference>
<dbReference type="InterPro" id="IPR027417">
    <property type="entry name" value="P-loop_NTPase"/>
</dbReference>
<dbReference type="NCBIfam" id="NF002223">
    <property type="entry name" value="PRK01117.1"/>
    <property type="match status" value="1"/>
</dbReference>
<dbReference type="NCBIfam" id="TIGR00184">
    <property type="entry name" value="purA"/>
    <property type="match status" value="1"/>
</dbReference>
<dbReference type="PANTHER" id="PTHR11846">
    <property type="entry name" value="ADENYLOSUCCINATE SYNTHETASE"/>
    <property type="match status" value="1"/>
</dbReference>
<dbReference type="PANTHER" id="PTHR11846:SF0">
    <property type="entry name" value="ADENYLOSUCCINATE SYNTHETASE"/>
    <property type="match status" value="1"/>
</dbReference>
<dbReference type="Pfam" id="PF00709">
    <property type="entry name" value="Adenylsucc_synt"/>
    <property type="match status" value="1"/>
</dbReference>
<dbReference type="SMART" id="SM00788">
    <property type="entry name" value="Adenylsucc_synt"/>
    <property type="match status" value="1"/>
</dbReference>
<dbReference type="SUPFAM" id="SSF52540">
    <property type="entry name" value="P-loop containing nucleoside triphosphate hydrolases"/>
    <property type="match status" value="1"/>
</dbReference>
<dbReference type="PROSITE" id="PS01266">
    <property type="entry name" value="ADENYLOSUCCIN_SYN_1"/>
    <property type="match status" value="1"/>
</dbReference>
<dbReference type="PROSITE" id="PS00513">
    <property type="entry name" value="ADENYLOSUCCIN_SYN_2"/>
    <property type="match status" value="1"/>
</dbReference>
<accession>P65888</accession>
<accession>Q97TC1</accession>
<evidence type="ECO:0000255" key="1">
    <source>
        <dbReference type="HAMAP-Rule" id="MF_00011"/>
    </source>
</evidence>